<comment type="function">
    <text evidence="1 3 4 6 7 10">Iron/alpha-ketoglutarate-dependent dioxygenase; part of the gene cluster that mediates the biosynthesis of penigequinolones, potent insecticidal alkaloids that contain a highly modified 10-carbon prenyl group (PubMed:25859931). The first stage is catalyzed by the nonribosomal peptide synthetase penN that condenses anthranilic acid and O-methyl-L-tyrosine to produce 4'-methoxycyclopeptin (By similarity). 4'-methoxycyclopeptin is then converted to 4'-methoxydehydrocyclopeptin by the ketoglutarate-dependent dioxygenase penM through dehydrogenation to form a double bond between C-alpha and C-beta of the O-methyltyrosine side chain (By similarity). PenM also converts its first product methoxydehydrocyclopeptin to 4'-methoxycyclopenin (By similarity). The following conversion of 4'methoxycyclopenin into 4'-methoxyviridicatin is catalyzed by the cyclopenase penL (By similarity). 4'-methoxyviridicatin is the precursor of quinolone natural products, and is further converted to quinolinone B (Probable). The prenyltransferase penI then catalyzes the canonical Friedel-Crafts alkylation of quinolinone B with dimethylallyl cation to yield dimethylallyl quinolone, which is subjected to FAD-dependent dehydrogenation by the FAD-linked oxidoreductase penH to yield conjugated aryl diene (PubMed:25859931). The delta(3') double bond then serves as the site of the second alkylation with DMAPP catalyzed by the prenyltransferase penG to yield a carbenium ion intermediate, which can be attacked by H(2)O to yield a styrenyl quinolone containing a C3'-hydroxyprenyl chain, or undergo cyclization to yield yaequinolones J1 and J2 (PubMed:25859931). The conversion of the styrenyl quinolone into the tetrahydrofuran-containing yaequinolone C is performed by the FAD-dependent monooxygenase penE and involves epoxidation of the terminal C7'-C8' olefin, followed by epoxide ring opening initiated by the C3' hydroxyl group (PubMed:25859931). The predicted cysteine hydrolase penJ acts as an epoxide hydrolase that enhances the rate of the 5-exo-tet cyclization step, increasing the yield of yaequinolone C (PubMed:25859931, PubMed:28114276). PenF catalyzes the cationic rearrangement of the epoxide formed by penE (before ring opening to produce yaequinolone C) into yaequinolone D (PubMed:28114276). Finally, the short-chain dehydrogenase/reductase (SDR)-like reductase penD, catalyzes both the dehydration of yaequinolone D and the reduction of the resulting oxonium to yield penigequinolone (PubMed:28114276).</text>
</comment>
<comment type="catalytic activity">
    <reaction evidence="3">
        <text>(-)-cyclopeptine + 2-oxoglutarate + O2 = (Z)-dehydrocyclopeptine + succinate + CO2 + H2O</text>
        <dbReference type="Rhea" id="RHEA:74479"/>
        <dbReference type="ChEBI" id="CHEBI:15377"/>
        <dbReference type="ChEBI" id="CHEBI:15379"/>
        <dbReference type="ChEBI" id="CHEBI:16526"/>
        <dbReference type="ChEBI" id="CHEBI:16810"/>
        <dbReference type="ChEBI" id="CHEBI:30031"/>
        <dbReference type="ChEBI" id="CHEBI:71330"/>
        <dbReference type="ChEBI" id="CHEBI:71333"/>
    </reaction>
    <physiologicalReaction direction="left-to-right" evidence="3">
        <dbReference type="Rhea" id="RHEA:74480"/>
    </physiologicalReaction>
</comment>
<comment type="catalytic activity">
    <reaction evidence="3">
        <text>(Z)-dehydrocyclopeptine + 2-oxoglutarate + O2 = (-)-cyclopenine + succinate + CO2</text>
        <dbReference type="Rhea" id="RHEA:74483"/>
        <dbReference type="ChEBI" id="CHEBI:15379"/>
        <dbReference type="ChEBI" id="CHEBI:16526"/>
        <dbReference type="ChEBI" id="CHEBI:16810"/>
        <dbReference type="ChEBI" id="CHEBI:30031"/>
        <dbReference type="ChEBI" id="CHEBI:71330"/>
        <dbReference type="ChEBI" id="CHEBI:193522"/>
    </reaction>
    <physiologicalReaction direction="left-to-right" evidence="3">
        <dbReference type="Rhea" id="RHEA:74484"/>
    </physiologicalReaction>
</comment>
<comment type="catalytic activity">
    <reaction evidence="3">
        <text>(-)-4'-methoxycyclopeptine + 2-oxoglutarate + O2 = (Z)-4'-methoxydehydrocyclopeptine + succinate + CO2 + H2O</text>
        <dbReference type="Rhea" id="RHEA:74471"/>
        <dbReference type="ChEBI" id="CHEBI:15377"/>
        <dbReference type="ChEBI" id="CHEBI:15379"/>
        <dbReference type="ChEBI" id="CHEBI:16526"/>
        <dbReference type="ChEBI" id="CHEBI:16810"/>
        <dbReference type="ChEBI" id="CHEBI:30031"/>
        <dbReference type="ChEBI" id="CHEBI:193537"/>
        <dbReference type="ChEBI" id="CHEBI:193538"/>
    </reaction>
    <physiologicalReaction direction="left-to-right" evidence="3">
        <dbReference type="Rhea" id="RHEA:74472"/>
    </physiologicalReaction>
</comment>
<comment type="catalytic activity">
    <reaction evidence="3">
        <text>(Z)-4'-methoxydehydrocyclopeptine + 2-oxoglutarate + O2 = (-)-4'-methoxycyclopenine + succinate + CO2</text>
        <dbReference type="Rhea" id="RHEA:74475"/>
        <dbReference type="ChEBI" id="CHEBI:15379"/>
        <dbReference type="ChEBI" id="CHEBI:16526"/>
        <dbReference type="ChEBI" id="CHEBI:16810"/>
        <dbReference type="ChEBI" id="CHEBI:30031"/>
        <dbReference type="ChEBI" id="CHEBI:193535"/>
        <dbReference type="ChEBI" id="CHEBI:193538"/>
    </reaction>
    <physiologicalReaction direction="left-to-right" evidence="3">
        <dbReference type="Rhea" id="RHEA:74476"/>
    </physiologicalReaction>
</comment>
<comment type="cofactor">
    <cofactor evidence="3">
        <name>Fe cation</name>
        <dbReference type="ChEBI" id="CHEBI:24875"/>
    </cofactor>
</comment>
<comment type="pathway">
    <text evidence="10">Secondary metabolite biosynthesis.</text>
</comment>
<comment type="pathway">
    <text evidence="10">Alkaloid biosynthesis.</text>
</comment>
<comment type="pathway">
    <text evidence="10">Mycotoxin biosynthesis.</text>
</comment>
<comment type="subunit">
    <text evidence="2">Homodimer.</text>
</comment>
<comment type="similarity">
    <text evidence="9">Belongs to the PhyH family.</text>
</comment>
<protein>
    <recommendedName>
        <fullName evidence="8">Iron/alpha-ketoglutarate-dependent dioxygenase penM</fullName>
        <ecNumber evidence="3">1.14.11.-</ecNumber>
    </recommendedName>
    <alternativeName>
        <fullName evidence="8">Penigequinolones biosynthesis cluster protein M</fullName>
    </alternativeName>
</protein>
<accession>A0A1B2CTC6</accession>
<keyword id="KW-0223">Dioxygenase</keyword>
<keyword id="KW-0408">Iron</keyword>
<keyword id="KW-0479">Metal-binding</keyword>
<keyword id="KW-0560">Oxidoreductase</keyword>
<proteinExistence type="inferred from homology"/>
<sequence length="312" mass="34607">MTIQDHTKRKIPRLSATRDCHEIWPTVQEHGAVIIKNLLPLEVVQRLNREVDPYVKIEPIPAAETKDHPNRVLSTTTRMINVLADFSKAYREDVLNNETLNKVSTDAFSVYGDYWVLMGAVMELAPTNPAQPLHRDMRFSHPLVDYLKHDAPPTSINLLIALTPFTVENGATHVILGSHKWPDLSGATMEQTVRAVMEPGDAVLITDNTVHCGGADMTGTETRRLLSLTMGISQITPLESNFTVPRPIIESLTPLAQRLVGWRSQRSSVPRDIGLLTIRGKSIENTLGLKSEQPLPDGMEKGSMQETDIGGQ</sequence>
<gene>
    <name evidence="8" type="primary">penM</name>
</gene>
<evidence type="ECO:0000250" key="1">
    <source>
        <dbReference type="UniProtKB" id="C8VJQ3"/>
    </source>
</evidence>
<evidence type="ECO:0000250" key="2">
    <source>
        <dbReference type="UniProtKB" id="Q4WAW9"/>
    </source>
</evidence>
<evidence type="ECO:0000250" key="3">
    <source>
        <dbReference type="UniProtKB" id="Q5AR53"/>
    </source>
</evidence>
<evidence type="ECO:0000250" key="4">
    <source>
        <dbReference type="UniProtKB" id="Q5AR54"/>
    </source>
</evidence>
<evidence type="ECO:0000256" key="5">
    <source>
        <dbReference type="SAM" id="MobiDB-lite"/>
    </source>
</evidence>
<evidence type="ECO:0000269" key="6">
    <source>
    </source>
</evidence>
<evidence type="ECO:0000269" key="7">
    <source>
    </source>
</evidence>
<evidence type="ECO:0000303" key="8">
    <source>
    </source>
</evidence>
<evidence type="ECO:0000305" key="9"/>
<evidence type="ECO:0000305" key="10">
    <source>
    </source>
</evidence>
<reference key="1">
    <citation type="journal article" date="2015" name="J. Am. Chem. Soc.">
        <title>Tandem prenyltransferases catalyze isoprenoid elongation and complexity generation in biosynthesis of quinolone alkaloids.</title>
        <authorList>
            <person name="Zou Y."/>
            <person name="Zhan Z."/>
            <person name="Li D."/>
            <person name="Tang M."/>
            <person name="Cacho R.A."/>
            <person name="Watanabe K."/>
            <person name="Tang Y."/>
        </authorList>
    </citation>
    <scope>NUCLEOTIDE SEQUENCE [GENOMIC DNA]</scope>
    <scope>FUNCTION</scope>
    <scope>PATHWAY</scope>
    <source>
        <strain>IBT 5891 / CBS 111225</strain>
    </source>
</reference>
<reference key="2">
    <citation type="journal article" date="2017" name="Nat. Chem. Biol.">
        <title>Enzyme-catalyzed cationic epoxide rearrangements in quinolone alkaloid biosynthesis.</title>
        <authorList>
            <person name="Zou Y."/>
            <person name="Garcia-Borras M."/>
            <person name="Tang M.C."/>
            <person name="Hirayama Y."/>
            <person name="Li D.H."/>
            <person name="Li L."/>
            <person name="Watanabe K."/>
            <person name="Houk K.N."/>
            <person name="Tang Y."/>
        </authorList>
    </citation>
    <scope>FUNCTION</scope>
</reference>
<name>PENM_PENTH</name>
<feature type="chain" id="PRO_0000455369" description="Iron/alpha-ketoglutarate-dependent dioxygenase penM">
    <location>
        <begin position="1"/>
        <end position="312"/>
    </location>
</feature>
<feature type="region of interest" description="Disordered" evidence="5">
    <location>
        <begin position="287"/>
        <end position="312"/>
    </location>
</feature>
<feature type="binding site" evidence="3">
    <location>
        <position position="134"/>
    </location>
    <ligand>
        <name>Fe cation</name>
        <dbReference type="ChEBI" id="CHEBI:24875"/>
    </ligand>
</feature>
<feature type="binding site" evidence="3">
    <location>
        <position position="136"/>
    </location>
    <ligand>
        <name>Fe cation</name>
        <dbReference type="ChEBI" id="CHEBI:24875"/>
    </ligand>
</feature>
<feature type="binding site" evidence="3">
    <location>
        <position position="211"/>
    </location>
    <ligand>
        <name>Fe cation</name>
        <dbReference type="ChEBI" id="CHEBI:24875"/>
    </ligand>
</feature>
<dbReference type="EC" id="1.14.11.-" evidence="3"/>
<dbReference type="EMBL" id="KX528209">
    <property type="protein sequence ID" value="ANY57891.1"/>
    <property type="molecule type" value="Genomic_DNA"/>
</dbReference>
<dbReference type="SMR" id="A0A1B2CTC6"/>
<dbReference type="GO" id="GO:0051213">
    <property type="term" value="F:dioxygenase activity"/>
    <property type="evidence" value="ECO:0007669"/>
    <property type="project" value="UniProtKB-KW"/>
</dbReference>
<dbReference type="GO" id="GO:0046872">
    <property type="term" value="F:metal ion binding"/>
    <property type="evidence" value="ECO:0007669"/>
    <property type="project" value="UniProtKB-KW"/>
</dbReference>
<dbReference type="GO" id="GO:0009058">
    <property type="term" value="P:biosynthetic process"/>
    <property type="evidence" value="ECO:0007669"/>
    <property type="project" value="UniProtKB-ARBA"/>
</dbReference>
<dbReference type="Gene3D" id="2.60.120.620">
    <property type="entry name" value="q2cbj1_9rhob like domain"/>
    <property type="match status" value="1"/>
</dbReference>
<dbReference type="InterPro" id="IPR008775">
    <property type="entry name" value="Phytyl_CoA_dOase-like"/>
</dbReference>
<dbReference type="PANTHER" id="PTHR20883:SF41">
    <property type="entry name" value="IRON_ALPHA-KETOGLUTARATE-DEPENDENT DIOXYGENASE ASQJ"/>
    <property type="match status" value="1"/>
</dbReference>
<dbReference type="PANTHER" id="PTHR20883">
    <property type="entry name" value="PHYTANOYL-COA DIOXYGENASE DOMAIN CONTAINING 1"/>
    <property type="match status" value="1"/>
</dbReference>
<dbReference type="Pfam" id="PF05721">
    <property type="entry name" value="PhyH"/>
    <property type="match status" value="1"/>
</dbReference>
<dbReference type="SUPFAM" id="SSF51197">
    <property type="entry name" value="Clavaminate synthase-like"/>
    <property type="match status" value="1"/>
</dbReference>
<organism>
    <name type="scientific">Penicillium thymicola</name>
    <dbReference type="NCBI Taxonomy" id="293382"/>
    <lineage>
        <taxon>Eukaryota</taxon>
        <taxon>Fungi</taxon>
        <taxon>Dikarya</taxon>
        <taxon>Ascomycota</taxon>
        <taxon>Pezizomycotina</taxon>
        <taxon>Eurotiomycetes</taxon>
        <taxon>Eurotiomycetidae</taxon>
        <taxon>Eurotiales</taxon>
        <taxon>Aspergillaceae</taxon>
        <taxon>Penicillium</taxon>
    </lineage>
</organism>